<comment type="function">
    <text evidence="1">Catalyzes the attachment of isoleucine to tRNA(Ile). As IleRS can inadvertently accommodate and process structurally similar amino acids such as valine, to avoid such errors it has two additional distinct tRNA(Ile)-dependent editing activities. One activity is designated as 'pretransfer' editing and involves the hydrolysis of activated Val-AMP. The other activity is designated 'posttransfer' editing and involves deacylation of mischarged Val-tRNA(Ile).</text>
</comment>
<comment type="catalytic activity">
    <reaction evidence="1">
        <text>tRNA(Ile) + L-isoleucine + ATP = L-isoleucyl-tRNA(Ile) + AMP + diphosphate</text>
        <dbReference type="Rhea" id="RHEA:11060"/>
        <dbReference type="Rhea" id="RHEA-COMP:9666"/>
        <dbReference type="Rhea" id="RHEA-COMP:9695"/>
        <dbReference type="ChEBI" id="CHEBI:30616"/>
        <dbReference type="ChEBI" id="CHEBI:33019"/>
        <dbReference type="ChEBI" id="CHEBI:58045"/>
        <dbReference type="ChEBI" id="CHEBI:78442"/>
        <dbReference type="ChEBI" id="CHEBI:78528"/>
        <dbReference type="ChEBI" id="CHEBI:456215"/>
        <dbReference type="EC" id="6.1.1.5"/>
    </reaction>
</comment>
<comment type="cofactor">
    <cofactor evidence="1">
        <name>Zn(2+)</name>
        <dbReference type="ChEBI" id="CHEBI:29105"/>
    </cofactor>
    <text evidence="1">Binds 1 zinc ion per subunit.</text>
</comment>
<comment type="subunit">
    <text evidence="1">Monomer.</text>
</comment>
<comment type="subcellular location">
    <subcellularLocation>
        <location evidence="1">Cytoplasm</location>
    </subcellularLocation>
</comment>
<comment type="domain">
    <text evidence="1">IleRS has two distinct active sites: one for aminoacylation and one for editing. The misactivated valine is translocated from the active site to the editing site, which sterically excludes the correctly activated isoleucine. The single editing site contains two valyl binding pockets, one specific for each substrate (Val-AMP or Val-tRNA(Ile)).</text>
</comment>
<comment type="similarity">
    <text evidence="1">Belongs to the class-I aminoacyl-tRNA synthetase family. IleS type 1 subfamily.</text>
</comment>
<dbReference type="EC" id="6.1.1.5" evidence="1"/>
<dbReference type="EMBL" id="CP000919">
    <property type="protein sequence ID" value="ACO19353.1"/>
    <property type="molecule type" value="Genomic_DNA"/>
</dbReference>
<dbReference type="RefSeq" id="WP_000768080.1">
    <property type="nucleotide sequence ID" value="NC_012466.1"/>
</dbReference>
<dbReference type="SMR" id="C1CFN0"/>
<dbReference type="KEGG" id="sjj:SPJ_1554"/>
<dbReference type="HOGENOM" id="CLU_001493_7_1_9"/>
<dbReference type="Proteomes" id="UP000002206">
    <property type="component" value="Chromosome"/>
</dbReference>
<dbReference type="GO" id="GO:0005829">
    <property type="term" value="C:cytosol"/>
    <property type="evidence" value="ECO:0007669"/>
    <property type="project" value="TreeGrafter"/>
</dbReference>
<dbReference type="GO" id="GO:0002161">
    <property type="term" value="F:aminoacyl-tRNA deacylase activity"/>
    <property type="evidence" value="ECO:0007669"/>
    <property type="project" value="InterPro"/>
</dbReference>
<dbReference type="GO" id="GO:0005524">
    <property type="term" value="F:ATP binding"/>
    <property type="evidence" value="ECO:0007669"/>
    <property type="project" value="UniProtKB-UniRule"/>
</dbReference>
<dbReference type="GO" id="GO:0004822">
    <property type="term" value="F:isoleucine-tRNA ligase activity"/>
    <property type="evidence" value="ECO:0007669"/>
    <property type="project" value="UniProtKB-UniRule"/>
</dbReference>
<dbReference type="GO" id="GO:0000049">
    <property type="term" value="F:tRNA binding"/>
    <property type="evidence" value="ECO:0007669"/>
    <property type="project" value="InterPro"/>
</dbReference>
<dbReference type="GO" id="GO:0008270">
    <property type="term" value="F:zinc ion binding"/>
    <property type="evidence" value="ECO:0007669"/>
    <property type="project" value="UniProtKB-UniRule"/>
</dbReference>
<dbReference type="GO" id="GO:0006428">
    <property type="term" value="P:isoleucyl-tRNA aminoacylation"/>
    <property type="evidence" value="ECO:0007669"/>
    <property type="project" value="UniProtKB-UniRule"/>
</dbReference>
<dbReference type="CDD" id="cd07960">
    <property type="entry name" value="Anticodon_Ia_Ile_BEm"/>
    <property type="match status" value="1"/>
</dbReference>
<dbReference type="CDD" id="cd00818">
    <property type="entry name" value="IleRS_core"/>
    <property type="match status" value="1"/>
</dbReference>
<dbReference type="FunFam" id="1.10.10.830:FF:000001">
    <property type="entry name" value="Isoleucine--tRNA ligase"/>
    <property type="match status" value="1"/>
</dbReference>
<dbReference type="FunFam" id="1.10.730.20:FF:000001">
    <property type="entry name" value="Isoleucine--tRNA ligase"/>
    <property type="match status" value="1"/>
</dbReference>
<dbReference type="FunFam" id="3.40.50.620:FF:000092">
    <property type="entry name" value="Isoleucine--tRNA ligase"/>
    <property type="match status" value="1"/>
</dbReference>
<dbReference type="FunFam" id="3.90.740.10:FF:000006">
    <property type="entry name" value="Isoleucine--tRNA ligase"/>
    <property type="match status" value="1"/>
</dbReference>
<dbReference type="Gene3D" id="1.10.730.20">
    <property type="match status" value="1"/>
</dbReference>
<dbReference type="Gene3D" id="3.40.50.620">
    <property type="entry name" value="HUPs"/>
    <property type="match status" value="2"/>
</dbReference>
<dbReference type="Gene3D" id="1.10.10.830">
    <property type="entry name" value="Ile-tRNA synthetase CP2 domain-like"/>
    <property type="match status" value="1"/>
</dbReference>
<dbReference type="Gene3D" id="3.90.740.10">
    <property type="entry name" value="Valyl/Leucyl/Isoleucyl-tRNA synthetase, editing domain"/>
    <property type="match status" value="1"/>
</dbReference>
<dbReference type="HAMAP" id="MF_02002">
    <property type="entry name" value="Ile_tRNA_synth_type1"/>
    <property type="match status" value="1"/>
</dbReference>
<dbReference type="InterPro" id="IPR001412">
    <property type="entry name" value="aa-tRNA-synth_I_CS"/>
</dbReference>
<dbReference type="InterPro" id="IPR002300">
    <property type="entry name" value="aa-tRNA-synth_Ia"/>
</dbReference>
<dbReference type="InterPro" id="IPR033708">
    <property type="entry name" value="Anticodon_Ile_BEm"/>
</dbReference>
<dbReference type="InterPro" id="IPR002301">
    <property type="entry name" value="Ile-tRNA-ligase"/>
</dbReference>
<dbReference type="InterPro" id="IPR023585">
    <property type="entry name" value="Ile-tRNA-ligase_type1"/>
</dbReference>
<dbReference type="InterPro" id="IPR050081">
    <property type="entry name" value="Ile-tRNA_ligase"/>
</dbReference>
<dbReference type="InterPro" id="IPR013155">
    <property type="entry name" value="M/V/L/I-tRNA-synth_anticd-bd"/>
</dbReference>
<dbReference type="InterPro" id="IPR014729">
    <property type="entry name" value="Rossmann-like_a/b/a_fold"/>
</dbReference>
<dbReference type="InterPro" id="IPR009080">
    <property type="entry name" value="tRNAsynth_Ia_anticodon-bd"/>
</dbReference>
<dbReference type="InterPro" id="IPR009008">
    <property type="entry name" value="Val/Leu/Ile-tRNA-synth_edit"/>
</dbReference>
<dbReference type="InterPro" id="IPR010663">
    <property type="entry name" value="Znf_FPG/IleRS"/>
</dbReference>
<dbReference type="NCBIfam" id="TIGR00392">
    <property type="entry name" value="ileS"/>
    <property type="match status" value="1"/>
</dbReference>
<dbReference type="PANTHER" id="PTHR42765:SF1">
    <property type="entry name" value="ISOLEUCINE--TRNA LIGASE, MITOCHONDRIAL"/>
    <property type="match status" value="1"/>
</dbReference>
<dbReference type="PANTHER" id="PTHR42765">
    <property type="entry name" value="SOLEUCYL-TRNA SYNTHETASE"/>
    <property type="match status" value="1"/>
</dbReference>
<dbReference type="Pfam" id="PF08264">
    <property type="entry name" value="Anticodon_1"/>
    <property type="match status" value="1"/>
</dbReference>
<dbReference type="Pfam" id="PF00133">
    <property type="entry name" value="tRNA-synt_1"/>
    <property type="match status" value="1"/>
</dbReference>
<dbReference type="Pfam" id="PF06827">
    <property type="entry name" value="zf-FPG_IleRS"/>
    <property type="match status" value="1"/>
</dbReference>
<dbReference type="PRINTS" id="PR00984">
    <property type="entry name" value="TRNASYNTHILE"/>
</dbReference>
<dbReference type="SUPFAM" id="SSF47323">
    <property type="entry name" value="Anticodon-binding domain of a subclass of class I aminoacyl-tRNA synthetases"/>
    <property type="match status" value="1"/>
</dbReference>
<dbReference type="SUPFAM" id="SSF52374">
    <property type="entry name" value="Nucleotidylyl transferase"/>
    <property type="match status" value="1"/>
</dbReference>
<dbReference type="SUPFAM" id="SSF50677">
    <property type="entry name" value="ValRS/IleRS/LeuRS editing domain"/>
    <property type="match status" value="1"/>
</dbReference>
<dbReference type="PROSITE" id="PS00178">
    <property type="entry name" value="AA_TRNA_LIGASE_I"/>
    <property type="match status" value="1"/>
</dbReference>
<reference key="1">
    <citation type="journal article" date="2010" name="Genome Biol.">
        <title>Structure and dynamics of the pan-genome of Streptococcus pneumoniae and closely related species.</title>
        <authorList>
            <person name="Donati C."/>
            <person name="Hiller N.L."/>
            <person name="Tettelin H."/>
            <person name="Muzzi A."/>
            <person name="Croucher N.J."/>
            <person name="Angiuoli S.V."/>
            <person name="Oggioni M."/>
            <person name="Dunning Hotopp J.C."/>
            <person name="Hu F.Z."/>
            <person name="Riley D.R."/>
            <person name="Covacci A."/>
            <person name="Mitchell T.J."/>
            <person name="Bentley S.D."/>
            <person name="Kilian M."/>
            <person name="Ehrlich G.D."/>
            <person name="Rappuoli R."/>
            <person name="Moxon E.R."/>
            <person name="Masignani V."/>
        </authorList>
    </citation>
    <scope>NUCLEOTIDE SEQUENCE [LARGE SCALE GENOMIC DNA]</scope>
    <source>
        <strain>JJA</strain>
    </source>
</reference>
<sequence length="930" mass="105397">MKLKDTLNLGKTEFPMRAGLPTKEPVWQKEWEDAKLYQRRQELNQGKPHFTLHDGPPYANGNIHVGHAMNKISKDIIVRSKSMSGFYAPFIPGWDTHGLPIEQVLSKQGVKRKEMDLVEYLKLCREYALSQVDKQREDFKRLGVSGDWENPYVTLTPDYEAAQIRVFGEMANKGYIYRGAKPVYWSWSSESALAEAEIEYHDLVSTSLYYANKVKDGKGVLDTDTYIVVWTTTPFTITASRGLTVGADIDYVLVQPAGEARKFVVAAELLTSLSEKFGWADVQVLETYRGQELNHIVTEHPWDTAVEELVILGDHVTTDSGTGIVHTAPGFGEDDYNVGIANNLEVAVTVDERGIMMKNAGPEFEGQFYEKVVPTVIEKLGNLLLAQEEISHSYPFDWRTKKPIIWRAVPQWFASVSKFRQEILDEIEKVKFHSEWGKVRLYNMIRDRGDWVISRQRAWGVPLPIFYAEDGTAIMVAETIEHVAQLFEEHGSSIWWERDAKDLLPEGFTHPGSPNGEFKKETDIMDVWFDSGSSWNGVVVNRPELTYPADLYLEGSDQYRGWFNSSLITSVANHGVAPYKQILSQGFALDGKGEKMSKSLGNTIAPSDVEKQFGAEILRLWVTSVDSSNDVRISMDILSQVSETYRKIRNTLRFLIANTSDFNPAQDTVAYDELRSVDKYMTIRFNQLVKTIRDAYADFEFLTIYKALVNFINVDLSAFYLDFAKDVVYIEGAKSLERRQMQTVFYDILVKITKLLTPILPHTAEEIWSYLEFETEDFVQLSELPEVQTFANQEEILDTWAAFMDFRGQAQKALEEARNAKVIGKSLEAHLTVYPNEVVKTLLEAVNSNVAQLLIVSELTIAEGPAPEAALSFEDVAFTVERAAGEVCDRCRRIDPTTAERSYQAVICDHCASIVEENFAEAVAEGFEEK</sequence>
<evidence type="ECO:0000255" key="1">
    <source>
        <dbReference type="HAMAP-Rule" id="MF_02002"/>
    </source>
</evidence>
<keyword id="KW-0030">Aminoacyl-tRNA synthetase</keyword>
<keyword id="KW-0067">ATP-binding</keyword>
<keyword id="KW-0963">Cytoplasm</keyword>
<keyword id="KW-0436">Ligase</keyword>
<keyword id="KW-0479">Metal-binding</keyword>
<keyword id="KW-0547">Nucleotide-binding</keyword>
<keyword id="KW-0648">Protein biosynthesis</keyword>
<keyword id="KW-0862">Zinc</keyword>
<name>SYI_STRZJ</name>
<protein>
    <recommendedName>
        <fullName evidence="1">Isoleucine--tRNA ligase</fullName>
        <ecNumber evidence="1">6.1.1.5</ecNumber>
    </recommendedName>
    <alternativeName>
        <fullName evidence="1">Isoleucyl-tRNA synthetase</fullName>
        <shortName evidence="1">IleRS</shortName>
    </alternativeName>
</protein>
<accession>C1CFN0</accession>
<proteinExistence type="inferred from homology"/>
<organism>
    <name type="scientific">Streptococcus pneumoniae (strain JJA)</name>
    <dbReference type="NCBI Taxonomy" id="488222"/>
    <lineage>
        <taxon>Bacteria</taxon>
        <taxon>Bacillati</taxon>
        <taxon>Bacillota</taxon>
        <taxon>Bacilli</taxon>
        <taxon>Lactobacillales</taxon>
        <taxon>Streptococcaceae</taxon>
        <taxon>Streptococcus</taxon>
    </lineage>
</organism>
<feature type="chain" id="PRO_1000189205" description="Isoleucine--tRNA ligase">
    <location>
        <begin position="1"/>
        <end position="930"/>
    </location>
</feature>
<feature type="short sequence motif" description="'HIGH' region">
    <location>
        <begin position="57"/>
        <end position="67"/>
    </location>
</feature>
<feature type="short sequence motif" description="'KMSKS' region">
    <location>
        <begin position="595"/>
        <end position="599"/>
    </location>
</feature>
<feature type="binding site" evidence="1">
    <location>
        <position position="554"/>
    </location>
    <ligand>
        <name>L-isoleucyl-5'-AMP</name>
        <dbReference type="ChEBI" id="CHEBI:178002"/>
    </ligand>
</feature>
<feature type="binding site" evidence="1">
    <location>
        <position position="598"/>
    </location>
    <ligand>
        <name>ATP</name>
        <dbReference type="ChEBI" id="CHEBI:30616"/>
    </ligand>
</feature>
<feature type="binding site" evidence="1">
    <location>
        <position position="888"/>
    </location>
    <ligand>
        <name>Zn(2+)</name>
        <dbReference type="ChEBI" id="CHEBI:29105"/>
    </ligand>
</feature>
<feature type="binding site" evidence="1">
    <location>
        <position position="891"/>
    </location>
    <ligand>
        <name>Zn(2+)</name>
        <dbReference type="ChEBI" id="CHEBI:29105"/>
    </ligand>
</feature>
<feature type="binding site" evidence="1">
    <location>
        <position position="908"/>
    </location>
    <ligand>
        <name>Zn(2+)</name>
        <dbReference type="ChEBI" id="CHEBI:29105"/>
    </ligand>
</feature>
<feature type="binding site" evidence="1">
    <location>
        <position position="911"/>
    </location>
    <ligand>
        <name>Zn(2+)</name>
        <dbReference type="ChEBI" id="CHEBI:29105"/>
    </ligand>
</feature>
<gene>
    <name evidence="1" type="primary">ileS</name>
    <name type="ordered locus">SPJ_1554</name>
</gene>